<dbReference type="EMBL" id="L41576">
    <property type="status" value="NOT_ANNOTATED_CDS"/>
    <property type="molecule type" value="Genomic_DNA"/>
</dbReference>
<dbReference type="SMR" id="P0C750"/>
<dbReference type="Proteomes" id="UP000002339">
    <property type="component" value="Genome"/>
</dbReference>
<proteinExistence type="predicted"/>
<gene>
    <name type="primary">DNA-U3</name>
    <name type="synonym">C2</name>
</gene>
<sequence>MTEGQGNRSTLFWLAQQDTRINLLIRRTRGRTEILLHLYKYPNPVKDNCSLSSVKVVVLRRKIASGDRRNDLHLERRRGNYEAYIGYL</sequence>
<keyword id="KW-1185">Reference proteome</keyword>
<feature type="chain" id="PRO_0000378545" description="Uncharacterized protein U3">
    <location>
        <begin position="1"/>
        <end position="88"/>
    </location>
</feature>
<protein>
    <recommendedName>
        <fullName>Uncharacterized protein U3</fullName>
    </recommendedName>
</protein>
<accession>P0C750</accession>
<name>U3_BBTVA</name>
<organism>
    <name type="scientific">Banana bunchy top virus (isolate Autralia)</name>
    <name type="common">BBTV</name>
    <dbReference type="NCBI Taxonomy" id="645099"/>
    <lineage>
        <taxon>Viruses</taxon>
        <taxon>Monodnaviria</taxon>
        <taxon>Shotokuvirae</taxon>
        <taxon>Cressdnaviricota</taxon>
        <taxon>Arfiviricetes</taxon>
        <taxon>Mulpavirales</taxon>
        <taxon>Nanoviridae</taxon>
        <taxon>Babuvirus</taxon>
        <taxon>Babuvirus musae</taxon>
        <taxon>Banana bunchy top virus</taxon>
    </lineage>
</organism>
<organismHost>
    <name type="scientific">Musa</name>
    <dbReference type="NCBI Taxonomy" id="4640"/>
</organismHost>
<reference key="1">
    <citation type="journal article" date="1995" name="J. Gen. Virol.">
        <title>The genome organization of banana bunchy top virus: analysis of six ssDNA components.</title>
        <authorList>
            <person name="Burns T.M."/>
            <person name="Harding R.M."/>
            <person name="Dale J.L."/>
        </authorList>
    </citation>
    <scope>NUCLEOTIDE SEQUENCE [GENOMIC DNA]</scope>
</reference>